<reference key="1">
    <citation type="journal article" date="2002" name="Nature">
        <title>The genome sequence of Schizosaccharomyces pombe.</title>
        <authorList>
            <person name="Wood V."/>
            <person name="Gwilliam R."/>
            <person name="Rajandream M.A."/>
            <person name="Lyne M.H."/>
            <person name="Lyne R."/>
            <person name="Stewart A."/>
            <person name="Sgouros J.G."/>
            <person name="Peat N."/>
            <person name="Hayles J."/>
            <person name="Baker S.G."/>
            <person name="Basham D."/>
            <person name="Bowman S."/>
            <person name="Brooks K."/>
            <person name="Brown D."/>
            <person name="Brown S."/>
            <person name="Chillingworth T."/>
            <person name="Churcher C.M."/>
            <person name="Collins M."/>
            <person name="Connor R."/>
            <person name="Cronin A."/>
            <person name="Davis P."/>
            <person name="Feltwell T."/>
            <person name="Fraser A."/>
            <person name="Gentles S."/>
            <person name="Goble A."/>
            <person name="Hamlin N."/>
            <person name="Harris D.E."/>
            <person name="Hidalgo J."/>
            <person name="Hodgson G."/>
            <person name="Holroyd S."/>
            <person name="Hornsby T."/>
            <person name="Howarth S."/>
            <person name="Huckle E.J."/>
            <person name="Hunt S."/>
            <person name="Jagels K."/>
            <person name="James K.D."/>
            <person name="Jones L."/>
            <person name="Jones M."/>
            <person name="Leather S."/>
            <person name="McDonald S."/>
            <person name="McLean J."/>
            <person name="Mooney P."/>
            <person name="Moule S."/>
            <person name="Mungall K.L."/>
            <person name="Murphy L.D."/>
            <person name="Niblett D."/>
            <person name="Odell C."/>
            <person name="Oliver K."/>
            <person name="O'Neil S."/>
            <person name="Pearson D."/>
            <person name="Quail M.A."/>
            <person name="Rabbinowitsch E."/>
            <person name="Rutherford K.M."/>
            <person name="Rutter S."/>
            <person name="Saunders D."/>
            <person name="Seeger K."/>
            <person name="Sharp S."/>
            <person name="Skelton J."/>
            <person name="Simmonds M.N."/>
            <person name="Squares R."/>
            <person name="Squares S."/>
            <person name="Stevens K."/>
            <person name="Taylor K."/>
            <person name="Taylor R.G."/>
            <person name="Tivey A."/>
            <person name="Walsh S.V."/>
            <person name="Warren T."/>
            <person name="Whitehead S."/>
            <person name="Woodward J.R."/>
            <person name="Volckaert G."/>
            <person name="Aert R."/>
            <person name="Robben J."/>
            <person name="Grymonprez B."/>
            <person name="Weltjens I."/>
            <person name="Vanstreels E."/>
            <person name="Rieger M."/>
            <person name="Schaefer M."/>
            <person name="Mueller-Auer S."/>
            <person name="Gabel C."/>
            <person name="Fuchs M."/>
            <person name="Duesterhoeft A."/>
            <person name="Fritzc C."/>
            <person name="Holzer E."/>
            <person name="Moestl D."/>
            <person name="Hilbert H."/>
            <person name="Borzym K."/>
            <person name="Langer I."/>
            <person name="Beck A."/>
            <person name="Lehrach H."/>
            <person name="Reinhardt R."/>
            <person name="Pohl T.M."/>
            <person name="Eger P."/>
            <person name="Zimmermann W."/>
            <person name="Wedler H."/>
            <person name="Wambutt R."/>
            <person name="Purnelle B."/>
            <person name="Goffeau A."/>
            <person name="Cadieu E."/>
            <person name="Dreano S."/>
            <person name="Gloux S."/>
            <person name="Lelaure V."/>
            <person name="Mottier S."/>
            <person name="Galibert F."/>
            <person name="Aves S.J."/>
            <person name="Xiang Z."/>
            <person name="Hunt C."/>
            <person name="Moore K."/>
            <person name="Hurst S.M."/>
            <person name="Lucas M."/>
            <person name="Rochet M."/>
            <person name="Gaillardin C."/>
            <person name="Tallada V.A."/>
            <person name="Garzon A."/>
            <person name="Thode G."/>
            <person name="Daga R.R."/>
            <person name="Cruzado L."/>
            <person name="Jimenez J."/>
            <person name="Sanchez M."/>
            <person name="del Rey F."/>
            <person name="Benito J."/>
            <person name="Dominguez A."/>
            <person name="Revuelta J.L."/>
            <person name="Moreno S."/>
            <person name="Armstrong J."/>
            <person name="Forsburg S.L."/>
            <person name="Cerutti L."/>
            <person name="Lowe T."/>
            <person name="McCombie W.R."/>
            <person name="Paulsen I."/>
            <person name="Potashkin J."/>
            <person name="Shpakovski G.V."/>
            <person name="Ussery D."/>
            <person name="Barrell B.G."/>
            <person name="Nurse P."/>
        </authorList>
    </citation>
    <scope>NUCLEOTIDE SEQUENCE [LARGE SCALE GENOMIC DNA]</scope>
    <source>
        <strain>972 / ATCC 24843</strain>
    </source>
</reference>
<reference key="2">
    <citation type="journal article" date="2006" name="Nat. Biotechnol.">
        <title>ORFeome cloning and global analysis of protein localization in the fission yeast Schizosaccharomyces pombe.</title>
        <authorList>
            <person name="Matsuyama A."/>
            <person name="Arai R."/>
            <person name="Yashiroda Y."/>
            <person name="Shirai A."/>
            <person name="Kamata A."/>
            <person name="Sekido S."/>
            <person name="Kobayashi Y."/>
            <person name="Hashimoto A."/>
            <person name="Hamamoto M."/>
            <person name="Hiraoka Y."/>
            <person name="Horinouchi S."/>
            <person name="Yoshida M."/>
        </authorList>
    </citation>
    <scope>SUBCELLULAR LOCATION [LARGE SCALE ANALYSIS]</scope>
</reference>
<reference key="3">
    <citation type="journal article" date="2008" name="J. Proteome Res.">
        <title>Phosphoproteome analysis of fission yeast.</title>
        <authorList>
            <person name="Wilson-Grady J.T."/>
            <person name="Villen J."/>
            <person name="Gygi S.P."/>
        </authorList>
    </citation>
    <scope>PHOSPHORYLATION [LARGE SCALE ANALYSIS] AT SER-384</scope>
    <scope>IDENTIFICATION BY MASS SPECTROMETRY</scope>
</reference>
<reference key="4">
    <citation type="journal article" date="2008" name="Nat. Struct. Mol. Biol.">
        <title>Fission yeast SWI/SNF and RSC complexes show compositional and functional differences from budding yeast.</title>
        <authorList>
            <person name="Monahan B.J."/>
            <person name="Villen J."/>
            <person name="Marguerat S."/>
            <person name="Baehler J."/>
            <person name="Gygi S.P."/>
            <person name="Winston F."/>
        </authorList>
    </citation>
    <scope>IDENTIFICATION IN THE RSC COMPLEX</scope>
    <scope>FUNCTION OF THE RSC COMPLEX</scope>
    <scope>IDENTIFICATION BY MASS SPECTROMETRY</scope>
</reference>
<organism>
    <name type="scientific">Schizosaccharomyces pombe (strain 972 / ATCC 24843)</name>
    <name type="common">Fission yeast</name>
    <dbReference type="NCBI Taxonomy" id="284812"/>
    <lineage>
        <taxon>Eukaryota</taxon>
        <taxon>Fungi</taxon>
        <taxon>Dikarya</taxon>
        <taxon>Ascomycota</taxon>
        <taxon>Taphrinomycotina</taxon>
        <taxon>Schizosaccharomycetes</taxon>
        <taxon>Schizosaccharomycetales</taxon>
        <taxon>Schizosaccharomycetaceae</taxon>
        <taxon>Schizosaccharomyces</taxon>
    </lineage>
</organism>
<gene>
    <name type="primary">rsc58</name>
    <name type="ORF">SPAC1F3.07c</name>
</gene>
<feature type="chain" id="PRO_0000116597" description="Chromatin structure-remodeling complex subunit rsc58">
    <location>
        <begin position="1"/>
        <end position="403"/>
    </location>
</feature>
<feature type="region of interest" description="Disordered" evidence="2">
    <location>
        <begin position="376"/>
        <end position="403"/>
    </location>
</feature>
<feature type="compositionally biased region" description="Low complexity" evidence="2">
    <location>
        <begin position="376"/>
        <end position="389"/>
    </location>
</feature>
<feature type="modified residue" description="Phosphoserine" evidence="4">
    <location>
        <position position="384"/>
    </location>
</feature>
<accession>Q10412</accession>
<evidence type="ECO:0000250" key="1"/>
<evidence type="ECO:0000256" key="2">
    <source>
        <dbReference type="SAM" id="MobiDB-lite"/>
    </source>
</evidence>
<evidence type="ECO:0000269" key="3">
    <source>
    </source>
</evidence>
<evidence type="ECO:0000269" key="4">
    <source>
    </source>
</evidence>
<evidence type="ECO:0000269" key="5">
    <source>
    </source>
</evidence>
<keyword id="KW-0156">Chromatin regulator</keyword>
<keyword id="KW-0963">Cytoplasm</keyword>
<keyword id="KW-0539">Nucleus</keyword>
<keyword id="KW-0597">Phosphoprotein</keyword>
<keyword id="KW-1185">Reference proteome</keyword>
<keyword id="KW-0804">Transcription</keyword>
<keyword id="KW-0805">Transcription regulation</keyword>
<dbReference type="EMBL" id="CU329670">
    <property type="protein sequence ID" value="CAA94625.1"/>
    <property type="molecule type" value="Genomic_DNA"/>
</dbReference>
<dbReference type="PIR" id="T38078">
    <property type="entry name" value="T38078"/>
</dbReference>
<dbReference type="RefSeq" id="NP_593010.1">
    <property type="nucleotide sequence ID" value="NM_001018409.2"/>
</dbReference>
<dbReference type="BioGRID" id="277925">
    <property type="interactions" value="10"/>
</dbReference>
<dbReference type="ComplexPortal" id="CPX-6363">
    <property type="entry name" value="RSC chromatin remodelling complex"/>
</dbReference>
<dbReference type="DIP" id="DIP-48392N"/>
<dbReference type="FunCoup" id="Q10412">
    <property type="interactions" value="269"/>
</dbReference>
<dbReference type="IntAct" id="Q10412">
    <property type="interactions" value="6"/>
</dbReference>
<dbReference type="STRING" id="284812.Q10412"/>
<dbReference type="iPTMnet" id="Q10412"/>
<dbReference type="PaxDb" id="4896-SPAC1F3.07c.1"/>
<dbReference type="EnsemblFungi" id="SPAC1F3.07c.1">
    <property type="protein sequence ID" value="SPAC1F3.07c.1:pep"/>
    <property type="gene ID" value="SPAC1F3.07c"/>
</dbReference>
<dbReference type="GeneID" id="2541419"/>
<dbReference type="KEGG" id="spo:2541419"/>
<dbReference type="PomBase" id="SPAC1F3.07c">
    <property type="gene designation" value="rsc58"/>
</dbReference>
<dbReference type="VEuPathDB" id="FungiDB:SPAC1F3.07c"/>
<dbReference type="eggNOG" id="ENOG502R7M9">
    <property type="taxonomic scope" value="Eukaryota"/>
</dbReference>
<dbReference type="HOGENOM" id="CLU_683628_0_0_1"/>
<dbReference type="InParanoid" id="Q10412"/>
<dbReference type="OMA" id="KSHALMM"/>
<dbReference type="PRO" id="PR:Q10412"/>
<dbReference type="Proteomes" id="UP000002485">
    <property type="component" value="Chromosome I"/>
</dbReference>
<dbReference type="GO" id="GO:0000785">
    <property type="term" value="C:chromatin"/>
    <property type="evidence" value="ECO:0000303"/>
    <property type="project" value="ComplexPortal"/>
</dbReference>
<dbReference type="GO" id="GO:0005829">
    <property type="term" value="C:cytosol"/>
    <property type="evidence" value="ECO:0007005"/>
    <property type="project" value="PomBase"/>
</dbReference>
<dbReference type="GO" id="GO:0005634">
    <property type="term" value="C:nucleus"/>
    <property type="evidence" value="ECO:0007005"/>
    <property type="project" value="PomBase"/>
</dbReference>
<dbReference type="GO" id="GO:0016586">
    <property type="term" value="C:RSC-type complex"/>
    <property type="evidence" value="ECO:0000314"/>
    <property type="project" value="PomBase"/>
</dbReference>
<dbReference type="GO" id="GO:0006338">
    <property type="term" value="P:chromatin remodeling"/>
    <property type="evidence" value="ECO:0000303"/>
    <property type="project" value="ComplexPortal"/>
</dbReference>
<dbReference type="GO" id="GO:0006357">
    <property type="term" value="P:regulation of transcription by RNA polymerase II"/>
    <property type="evidence" value="ECO:0000318"/>
    <property type="project" value="GO_Central"/>
</dbReference>
<dbReference type="GO" id="GO:0045815">
    <property type="term" value="P:transcription initiation-coupled chromatin remodeling"/>
    <property type="evidence" value="ECO:0000305"/>
    <property type="project" value="PomBase"/>
</dbReference>
<comment type="function">
    <text evidence="5">Component of the chromatin structure remodeling complex (RSC), which is involved in transcription regulation and nucleosome positioning. Controls particularly membrane and organelle development genes.</text>
</comment>
<comment type="subunit">
    <text evidence="1">Component of the RSC complex composed of at least arp9, arp42, rsc1, rsc4, rsc7, rsc9, rsc58, sfh1, snf21, ssr1, ssr2, ssr3 and ssr4. The complex interacts with histone and histone variant components of centromeric chromatin (By similarity).</text>
</comment>
<comment type="subcellular location">
    <subcellularLocation>
        <location evidence="3">Cytoplasm</location>
    </subcellularLocation>
    <subcellularLocation>
        <location evidence="3">Nucleus</location>
    </subcellularLocation>
</comment>
<name>RSC58_SCHPO</name>
<sequence length="403" mass="44621">MNAESCSLILSYISSAPAGNLVLNCTATTNKQTLEANLKSAVYQRYPEFLEDWTNVCVHIIHSYFPKDADYWNVDKLYTSVNRITTLEQSKVVGKEIKNGFTFDAENSTASLENDLQPQFRSHALFMVGSAGPLFSSTARTSRLDSRLPDGGIIAKPVALLPTPSVANSQEYTLDKLSPPSTAKPPASVIEFNPSLAKLPTVKYLQSGPFSSIAPYKNSSSSVIPDSSFHSVACYRASSHYKEAPVEKSIDIDIIQNNLSLLEEDSWTSVPIQGELVELNKLLQHLQLLQNQRITSHNVLSDEERQISVQVQNLILKLAKDYDMSPEDFLMDDFTLSLTQYGAFYRGTLPLSAQPLELPSQQLLRSQSNAALRSNSLSMNGSLSPSSTNVPLQSYRRTTKSRR</sequence>
<proteinExistence type="evidence at protein level"/>
<protein>
    <recommendedName>
        <fullName>Chromatin structure-remodeling complex subunit rsc58</fullName>
    </recommendedName>
    <alternativeName>
        <fullName>RSC complex subunit rsc58</fullName>
    </alternativeName>
</protein>